<evidence type="ECO:0000250" key="1"/>
<evidence type="ECO:0000250" key="2">
    <source>
        <dbReference type="UniProtKB" id="P29016"/>
    </source>
</evidence>
<evidence type="ECO:0000255" key="3"/>
<evidence type="ECO:0000255" key="4">
    <source>
        <dbReference type="PROSITE-ProRule" id="PRU00114"/>
    </source>
</evidence>
<evidence type="ECO:0000269" key="5">
    <source>
    </source>
</evidence>
<protein>
    <recommendedName>
        <fullName>T-cell surface glycoprotein CD1b</fullName>
    </recommendedName>
    <cdAntigenName>CD1b</cdAntigenName>
</protein>
<reference key="1">
    <citation type="journal article" date="2004" name="Immunogenetics">
        <title>Identifying and structurally characterizing CD1b in Aotus nancymaae owl monkeys.</title>
        <authorList>
            <person name="Castillo F."/>
            <person name="Guerrero C."/>
            <person name="Trujillo E."/>
            <person name="Delgado G."/>
            <person name="Martinez P."/>
            <person name="Salazar L.M."/>
            <person name="Barato P."/>
            <person name="Patarroyo M.E."/>
            <person name="Parra-Lopez C."/>
        </authorList>
    </citation>
    <scope>NUCLEOTIDE SEQUENCE [MRNA]</scope>
    <scope>TISSUE SPECIFICITY</scope>
    <source>
        <tissue>Monocyte</tissue>
    </source>
</reference>
<comment type="function">
    <text evidence="1">Antigen-presenting protein that binds self and non-self lipid and glycolipid antigens and presents them to T-cell receptors on natural killer T-cells.</text>
</comment>
<comment type="subunit">
    <text evidence="1">Heterodimer with B2M (beta-2-microglobulin). Interacts with saposin C (By similarity).</text>
</comment>
<comment type="subcellular location">
    <subcellularLocation>
        <location evidence="2">Cell membrane</location>
        <topology evidence="3">Single-pass type I membrane protein</topology>
    </subcellularLocation>
    <subcellularLocation>
        <location evidence="2">Endosome membrane</location>
        <topology evidence="3">Single-pass type I membrane protein</topology>
    </subcellularLocation>
    <subcellularLocation>
        <location evidence="2">Lysosome membrane</location>
        <topology evidence="3">Single-pass type I membrane protein</topology>
    </subcellularLocation>
    <text evidence="2">Subject to intracellular trafficking between the cell membrane, endosomes and lysosomes.</text>
</comment>
<comment type="tissue specificity">
    <text evidence="5">Expressed in lymphocytes, spleen, lung, liver, kidney and heart.</text>
</comment>
<comment type="miscellaneous">
    <text evidence="1">During protein synthesis and maturation, CD1 family members bind endogenous lipids that are replaced by lipid or glycolipid antigens when the proteins are internalized and pass through endosomes or lysosomes, before trafficking back to the cell surface. Interaction with saposin C is required for the loading of bacterial lipid antigens onto CD1B in the lysosome (By similarity).</text>
</comment>
<accession>Q5YB65</accession>
<gene>
    <name type="primary">CD1B</name>
</gene>
<keyword id="KW-1064">Adaptive immunity</keyword>
<keyword id="KW-1003">Cell membrane</keyword>
<keyword id="KW-1015">Disulfide bond</keyword>
<keyword id="KW-0967">Endosome</keyword>
<keyword id="KW-0325">Glycoprotein</keyword>
<keyword id="KW-0391">Immunity</keyword>
<keyword id="KW-0393">Immunoglobulin domain</keyword>
<keyword id="KW-0458">Lysosome</keyword>
<keyword id="KW-0472">Membrane</keyword>
<keyword id="KW-1185">Reference proteome</keyword>
<keyword id="KW-0732">Signal</keyword>
<keyword id="KW-0812">Transmembrane</keyword>
<keyword id="KW-1133">Transmembrane helix</keyword>
<feature type="signal peptide" evidence="3">
    <location>
        <begin position="1"/>
        <end position="18"/>
    </location>
</feature>
<feature type="chain" id="PRO_0000045408" description="T-cell surface glycoprotein CD1b">
    <location>
        <begin position="19"/>
        <end position="333"/>
    </location>
</feature>
<feature type="topological domain" description="Extracellular" evidence="3">
    <location>
        <begin position="19"/>
        <end position="303"/>
    </location>
</feature>
<feature type="transmembrane region" description="Helical" evidence="3">
    <location>
        <begin position="304"/>
        <end position="324"/>
    </location>
</feature>
<feature type="topological domain" description="Cytoplasmic" evidence="3">
    <location>
        <begin position="325"/>
        <end position="333"/>
    </location>
</feature>
<feature type="domain" description="Ig-like">
    <location>
        <begin position="185"/>
        <end position="295"/>
    </location>
</feature>
<feature type="short sequence motif" description="Internalization signal" evidence="1">
    <location>
        <begin position="329"/>
        <end position="332"/>
    </location>
</feature>
<feature type="glycosylation site" description="N-linked (GlcNAc...) asparagine" evidence="3">
    <location>
        <position position="38"/>
    </location>
</feature>
<feature type="glycosylation site" description="N-linked (GlcNAc...) asparagine" evidence="3">
    <location>
        <position position="75"/>
    </location>
</feature>
<feature type="glycosylation site" description="N-linked (GlcNAc...) asparagine" evidence="3">
    <location>
        <position position="146"/>
    </location>
</feature>
<feature type="glycosylation site" description="N-linked (GlcNAc...) asparagine" evidence="3">
    <location>
        <position position="258"/>
    </location>
</feature>
<feature type="disulfide bond" evidence="4">
    <location>
        <begin position="120"/>
        <end position="184"/>
    </location>
</feature>
<feature type="disulfide bond" evidence="4">
    <location>
        <begin position="149"/>
        <end position="163"/>
    </location>
</feature>
<feature type="disulfide bond" evidence="4">
    <location>
        <begin position="224"/>
        <end position="279"/>
    </location>
</feature>
<proteinExistence type="evidence at transcript level"/>
<organism>
    <name type="scientific">Aotus nancymaae</name>
    <name type="common">Ma's night monkey</name>
    <dbReference type="NCBI Taxonomy" id="37293"/>
    <lineage>
        <taxon>Eukaryota</taxon>
        <taxon>Metazoa</taxon>
        <taxon>Chordata</taxon>
        <taxon>Craniata</taxon>
        <taxon>Vertebrata</taxon>
        <taxon>Euteleostomi</taxon>
        <taxon>Mammalia</taxon>
        <taxon>Eutheria</taxon>
        <taxon>Euarchontoglires</taxon>
        <taxon>Primates</taxon>
        <taxon>Haplorrhini</taxon>
        <taxon>Platyrrhini</taxon>
        <taxon>Aotidae</taxon>
        <taxon>Aotus</taxon>
    </lineage>
</organism>
<name>CD1B_AOTNA</name>
<sequence>MLLLPFQLLAVLFPGGNSEHAFQGPTSFHVIQTSSFTNSTWAQTQGSGWLDDLQIHGWDSDSGTAIFLKPWSKGNFSDKEVAELEEIFRVYILGFAREVQDFAGDFQMKYPFEIQGIAGCGLHSGGAIVSFLRGALGGLDFLSVKNASCVPSPEGGSRAQKVCALIMQYQGIMEIVRLLLYKTCPRYLLGVLNAGKADLQGKMKPEAWLSSGPSPGPGRLLLVCHVSGFCPKPVWVMWMPGEQEQQGTQLGDILPNANWTWYLRATLDVAAGEAAGLSCRVKHSSLEGQDIILYWSNPTSIGSIVLAIIVPSLLLLLCLALWYMRRRSYQNIP</sequence>
<dbReference type="EMBL" id="AY605931">
    <property type="protein sequence ID" value="AAT37499.1"/>
    <property type="molecule type" value="mRNA"/>
</dbReference>
<dbReference type="SMR" id="Q5YB65"/>
<dbReference type="STRING" id="37293.ENSANAP00000022297"/>
<dbReference type="GlyCosmos" id="Q5YB65">
    <property type="glycosylation" value="4 sites, No reported glycans"/>
</dbReference>
<dbReference type="Proteomes" id="UP000233020">
    <property type="component" value="Whole Genome Shotgun Assembly"/>
</dbReference>
<dbReference type="GO" id="GO:0010008">
    <property type="term" value="C:endosome membrane"/>
    <property type="evidence" value="ECO:0007669"/>
    <property type="project" value="UniProtKB-SubCell"/>
</dbReference>
<dbReference type="GO" id="GO:0009897">
    <property type="term" value="C:external side of plasma membrane"/>
    <property type="evidence" value="ECO:0007669"/>
    <property type="project" value="TreeGrafter"/>
</dbReference>
<dbReference type="GO" id="GO:0005615">
    <property type="term" value="C:extracellular space"/>
    <property type="evidence" value="ECO:0007669"/>
    <property type="project" value="TreeGrafter"/>
</dbReference>
<dbReference type="GO" id="GO:0005765">
    <property type="term" value="C:lysosomal membrane"/>
    <property type="evidence" value="ECO:0007669"/>
    <property type="project" value="UniProtKB-SubCell"/>
</dbReference>
<dbReference type="GO" id="GO:0030883">
    <property type="term" value="F:endogenous lipid antigen binding"/>
    <property type="evidence" value="ECO:0007669"/>
    <property type="project" value="TreeGrafter"/>
</dbReference>
<dbReference type="GO" id="GO:0030884">
    <property type="term" value="F:exogenous lipid antigen binding"/>
    <property type="evidence" value="ECO:0007669"/>
    <property type="project" value="TreeGrafter"/>
</dbReference>
<dbReference type="GO" id="GO:0071723">
    <property type="term" value="F:lipopeptide binding"/>
    <property type="evidence" value="ECO:0007669"/>
    <property type="project" value="TreeGrafter"/>
</dbReference>
<dbReference type="GO" id="GO:0002250">
    <property type="term" value="P:adaptive immune response"/>
    <property type="evidence" value="ECO:0007669"/>
    <property type="project" value="UniProtKB-KW"/>
</dbReference>
<dbReference type="GO" id="GO:0048006">
    <property type="term" value="P:antigen processing and presentation, endogenous lipid antigen via MHC class Ib"/>
    <property type="evidence" value="ECO:0007669"/>
    <property type="project" value="TreeGrafter"/>
</dbReference>
<dbReference type="GO" id="GO:0048007">
    <property type="term" value="P:antigen processing and presentation, exogenous lipid antigen via MHC class Ib"/>
    <property type="evidence" value="ECO:0007669"/>
    <property type="project" value="TreeGrafter"/>
</dbReference>
<dbReference type="GO" id="GO:0001916">
    <property type="term" value="P:positive regulation of T cell mediated cytotoxicity"/>
    <property type="evidence" value="ECO:0007669"/>
    <property type="project" value="TreeGrafter"/>
</dbReference>
<dbReference type="CDD" id="cd21029">
    <property type="entry name" value="IgC1_CD1"/>
    <property type="match status" value="1"/>
</dbReference>
<dbReference type="FunFam" id="2.60.40.10:FF:000254">
    <property type="entry name" value="Antigen-presenting glycoprotein CD1d1"/>
    <property type="match status" value="1"/>
</dbReference>
<dbReference type="FunFam" id="3.30.500.10:FF:000002">
    <property type="entry name" value="Antigen-presenting glycoprotein CD1d1"/>
    <property type="match status" value="1"/>
</dbReference>
<dbReference type="Gene3D" id="2.60.40.10">
    <property type="entry name" value="Immunoglobulins"/>
    <property type="match status" value="1"/>
</dbReference>
<dbReference type="Gene3D" id="3.30.500.10">
    <property type="entry name" value="MHC class I-like antigen recognition-like"/>
    <property type="match status" value="1"/>
</dbReference>
<dbReference type="InterPro" id="IPR007110">
    <property type="entry name" value="Ig-like_dom"/>
</dbReference>
<dbReference type="InterPro" id="IPR036179">
    <property type="entry name" value="Ig-like_dom_sf"/>
</dbReference>
<dbReference type="InterPro" id="IPR013783">
    <property type="entry name" value="Ig-like_fold"/>
</dbReference>
<dbReference type="InterPro" id="IPR003597">
    <property type="entry name" value="Ig_C1-set"/>
</dbReference>
<dbReference type="InterPro" id="IPR050208">
    <property type="entry name" value="MHC_class-I_related"/>
</dbReference>
<dbReference type="InterPro" id="IPR011161">
    <property type="entry name" value="MHC_I-like_Ag-recog"/>
</dbReference>
<dbReference type="InterPro" id="IPR037055">
    <property type="entry name" value="MHC_I-like_Ag-recog_sf"/>
</dbReference>
<dbReference type="InterPro" id="IPR011162">
    <property type="entry name" value="MHC_I/II-like_Ag-recog"/>
</dbReference>
<dbReference type="PANTHER" id="PTHR16675">
    <property type="entry name" value="MHC CLASS I-RELATED"/>
    <property type="match status" value="1"/>
</dbReference>
<dbReference type="PANTHER" id="PTHR16675:SF130">
    <property type="entry name" value="T-CELL SURFACE GLYCOPROTEIN CD1B"/>
    <property type="match status" value="1"/>
</dbReference>
<dbReference type="Pfam" id="PF07654">
    <property type="entry name" value="C1-set"/>
    <property type="match status" value="1"/>
</dbReference>
<dbReference type="Pfam" id="PF16497">
    <property type="entry name" value="MHC_I_3"/>
    <property type="match status" value="1"/>
</dbReference>
<dbReference type="SMART" id="SM00407">
    <property type="entry name" value="IGc1"/>
    <property type="match status" value="1"/>
</dbReference>
<dbReference type="SUPFAM" id="SSF48726">
    <property type="entry name" value="Immunoglobulin"/>
    <property type="match status" value="1"/>
</dbReference>
<dbReference type="SUPFAM" id="SSF54452">
    <property type="entry name" value="MHC antigen-recognition domain"/>
    <property type="match status" value="1"/>
</dbReference>
<dbReference type="PROSITE" id="PS50835">
    <property type="entry name" value="IG_LIKE"/>
    <property type="match status" value="1"/>
</dbReference>